<keyword id="KW-0054">Arabinose catabolism</keyword>
<keyword id="KW-0067">ATP-binding</keyword>
<keyword id="KW-0119">Carbohydrate metabolism</keyword>
<keyword id="KW-0418">Kinase</keyword>
<keyword id="KW-0547">Nucleotide-binding</keyword>
<keyword id="KW-1185">Reference proteome</keyword>
<keyword id="KW-0808">Transferase</keyword>
<proteinExistence type="inferred from homology"/>
<reference key="1">
    <citation type="submission" date="2003-10" db="EMBL/GenBank/DDBJ databases">
        <title>The complete genome sequence of the alkaliphilic Bacillus clausii KSM-K16.</title>
        <authorList>
            <person name="Takaki Y."/>
            <person name="Kageyama Y."/>
            <person name="Shimamura S."/>
            <person name="Suzuki H."/>
            <person name="Nishi S."/>
            <person name="Hatada Y."/>
            <person name="Kawai S."/>
            <person name="Ito S."/>
            <person name="Horikoshi K."/>
        </authorList>
    </citation>
    <scope>NUCLEOTIDE SEQUENCE [LARGE SCALE GENOMIC DNA]</scope>
    <source>
        <strain>KSM-K16</strain>
    </source>
</reference>
<accession>Q5WL06</accession>
<comment type="catalytic activity">
    <reaction evidence="1">
        <text>D-ribulose + ATP = D-ribulose 5-phosphate + ADP + H(+)</text>
        <dbReference type="Rhea" id="RHEA:17601"/>
        <dbReference type="ChEBI" id="CHEBI:15378"/>
        <dbReference type="ChEBI" id="CHEBI:17173"/>
        <dbReference type="ChEBI" id="CHEBI:30616"/>
        <dbReference type="ChEBI" id="CHEBI:58121"/>
        <dbReference type="ChEBI" id="CHEBI:456216"/>
        <dbReference type="EC" id="2.7.1.16"/>
    </reaction>
</comment>
<comment type="catalytic activity">
    <reaction evidence="1">
        <text>L-ribulose + ATP = L-ribulose 5-phosphate + ADP + H(+)</text>
        <dbReference type="Rhea" id="RHEA:22072"/>
        <dbReference type="ChEBI" id="CHEBI:15378"/>
        <dbReference type="ChEBI" id="CHEBI:16880"/>
        <dbReference type="ChEBI" id="CHEBI:30616"/>
        <dbReference type="ChEBI" id="CHEBI:58226"/>
        <dbReference type="ChEBI" id="CHEBI:456216"/>
        <dbReference type="EC" id="2.7.1.16"/>
    </reaction>
</comment>
<comment type="pathway">
    <text evidence="1">Carbohydrate degradation; L-arabinose degradation via L-ribulose; D-xylulose 5-phosphate from L-arabinose (bacterial route): step 2/3.</text>
</comment>
<comment type="similarity">
    <text evidence="1">Belongs to the ribulokinase family.</text>
</comment>
<evidence type="ECO:0000255" key="1">
    <source>
        <dbReference type="HAMAP-Rule" id="MF_00520"/>
    </source>
</evidence>
<feature type="chain" id="PRO_0000198355" description="Ribulokinase">
    <location>
        <begin position="1"/>
        <end position="561"/>
    </location>
</feature>
<name>ARAB_SHOC1</name>
<protein>
    <recommendedName>
        <fullName evidence="1">Ribulokinase</fullName>
        <ecNumber evidence="1">2.7.1.16</ecNumber>
    </recommendedName>
</protein>
<sequence length="561" mass="61036">MKRYTIGIDYGTESGRAVLVDLENGAEVAEHVTPYAHGVIDQCLPDSGRSLEPEWALQHPGDYLDVLRLSVPKVVEIADISASQVIGIGIDFTACTMLPIDKHGDPLCFDPQLAGRPHSWVKLWKHHAAQDEADEINRIAEERKEAFLARYGGKYSSEWMVSKIWQIFNEDPDMFEKADAFLEATDWVVAQLTGTIVRNSCTAGYKAMWHKRDGYPDDSFFAALDPGLAQLTTTKLRGDILAPGQRAGGLTAEMAETLGLKPGTAVAVGNVDAHVAVPAAGVVTPGKMVMVMGTSICHLVLAKEEREVEGMCGVVEDGIVPGYFGYEAGQSAVGDIFAWLMKHGIPADLKQEAEQAGKPLHSLLEEKAAAYRPGETGLLALDWWNGNRSTLVDANLTGLILGYTLQTKAEELYRTLLEATAFGTKKIIDAFRDSGVEVNVLYACGGLPQKNELLMQIYADVTNLEIKVAASKQTPALGAAMYASVAAGDEAGGYETIFAAAEKMAHTKARSFKPNHENVRLYQALYEEYSKLHDYFGRGENDVMKTLKQLRSRAKGGAVHA</sequence>
<dbReference type="EC" id="2.7.1.16" evidence="1"/>
<dbReference type="EMBL" id="AP006627">
    <property type="protein sequence ID" value="BAD62949.1"/>
    <property type="molecule type" value="Genomic_DNA"/>
</dbReference>
<dbReference type="RefSeq" id="WP_011245268.1">
    <property type="nucleotide sequence ID" value="NC_006582.1"/>
</dbReference>
<dbReference type="SMR" id="Q5WL06"/>
<dbReference type="STRING" id="66692.ABC0407"/>
<dbReference type="KEGG" id="bcl:ABC0407"/>
<dbReference type="eggNOG" id="COG1069">
    <property type="taxonomic scope" value="Bacteria"/>
</dbReference>
<dbReference type="HOGENOM" id="CLU_009281_9_1_9"/>
<dbReference type="OrthoDB" id="9805576at2"/>
<dbReference type="UniPathway" id="UPA00145">
    <property type="reaction ID" value="UER00566"/>
</dbReference>
<dbReference type="Proteomes" id="UP000001168">
    <property type="component" value="Chromosome"/>
</dbReference>
<dbReference type="GO" id="GO:0005737">
    <property type="term" value="C:cytoplasm"/>
    <property type="evidence" value="ECO:0007669"/>
    <property type="project" value="TreeGrafter"/>
</dbReference>
<dbReference type="GO" id="GO:0005524">
    <property type="term" value="F:ATP binding"/>
    <property type="evidence" value="ECO:0007669"/>
    <property type="project" value="UniProtKB-KW"/>
</dbReference>
<dbReference type="GO" id="GO:0019150">
    <property type="term" value="F:D-ribulokinase activity"/>
    <property type="evidence" value="ECO:0007669"/>
    <property type="project" value="RHEA"/>
</dbReference>
<dbReference type="GO" id="GO:0008741">
    <property type="term" value="F:ribulokinase activity"/>
    <property type="evidence" value="ECO:0007669"/>
    <property type="project" value="UniProtKB-UniRule"/>
</dbReference>
<dbReference type="GO" id="GO:0019569">
    <property type="term" value="P:L-arabinose catabolic process to xylulose 5-phosphate"/>
    <property type="evidence" value="ECO:0007669"/>
    <property type="project" value="UniProtKB-UniRule"/>
</dbReference>
<dbReference type="CDD" id="cd07781">
    <property type="entry name" value="ASKHA_NBD_FGGY_L-RBK"/>
    <property type="match status" value="1"/>
</dbReference>
<dbReference type="Gene3D" id="3.30.420.40">
    <property type="match status" value="2"/>
</dbReference>
<dbReference type="HAMAP" id="MF_00520">
    <property type="entry name" value="Ribulokinase"/>
    <property type="match status" value="1"/>
</dbReference>
<dbReference type="InterPro" id="IPR043129">
    <property type="entry name" value="ATPase_NBD"/>
</dbReference>
<dbReference type="InterPro" id="IPR000577">
    <property type="entry name" value="Carb_kinase_FGGY"/>
</dbReference>
<dbReference type="InterPro" id="IPR018485">
    <property type="entry name" value="FGGY_C"/>
</dbReference>
<dbReference type="InterPro" id="IPR018484">
    <property type="entry name" value="FGGY_N"/>
</dbReference>
<dbReference type="InterPro" id="IPR005929">
    <property type="entry name" value="Ribulokinase"/>
</dbReference>
<dbReference type="NCBIfam" id="TIGR01234">
    <property type="entry name" value="L-ribulokinase"/>
    <property type="match status" value="1"/>
</dbReference>
<dbReference type="NCBIfam" id="NF003154">
    <property type="entry name" value="PRK04123.1"/>
    <property type="match status" value="1"/>
</dbReference>
<dbReference type="PANTHER" id="PTHR43435:SF4">
    <property type="entry name" value="FGGY CARBOHYDRATE KINASE DOMAIN-CONTAINING PROTEIN"/>
    <property type="match status" value="1"/>
</dbReference>
<dbReference type="PANTHER" id="PTHR43435">
    <property type="entry name" value="RIBULOKINASE"/>
    <property type="match status" value="1"/>
</dbReference>
<dbReference type="Pfam" id="PF02782">
    <property type="entry name" value="FGGY_C"/>
    <property type="match status" value="1"/>
</dbReference>
<dbReference type="Pfam" id="PF00370">
    <property type="entry name" value="FGGY_N"/>
    <property type="match status" value="1"/>
</dbReference>
<dbReference type="PIRSF" id="PIRSF000538">
    <property type="entry name" value="GlpK"/>
    <property type="match status" value="1"/>
</dbReference>
<dbReference type="SUPFAM" id="SSF53067">
    <property type="entry name" value="Actin-like ATPase domain"/>
    <property type="match status" value="2"/>
</dbReference>
<gene>
    <name evidence="1" type="primary">araB</name>
    <name type="ordered locus">ABC0407</name>
</gene>
<organism>
    <name type="scientific">Shouchella clausii (strain KSM-K16)</name>
    <name type="common">Alkalihalobacillus clausii</name>
    <dbReference type="NCBI Taxonomy" id="66692"/>
    <lineage>
        <taxon>Bacteria</taxon>
        <taxon>Bacillati</taxon>
        <taxon>Bacillota</taxon>
        <taxon>Bacilli</taxon>
        <taxon>Bacillales</taxon>
        <taxon>Bacillaceae</taxon>
        <taxon>Shouchella</taxon>
    </lineage>
</organism>